<comment type="function">
    <text evidence="1">Catalyzes the condensation of iminoaspartate with dihydroxyacetone phosphate to form quinolinate.</text>
</comment>
<comment type="catalytic activity">
    <reaction evidence="1">
        <text>iminosuccinate + dihydroxyacetone phosphate = quinolinate + phosphate + 2 H2O + H(+)</text>
        <dbReference type="Rhea" id="RHEA:25888"/>
        <dbReference type="ChEBI" id="CHEBI:15377"/>
        <dbReference type="ChEBI" id="CHEBI:15378"/>
        <dbReference type="ChEBI" id="CHEBI:29959"/>
        <dbReference type="ChEBI" id="CHEBI:43474"/>
        <dbReference type="ChEBI" id="CHEBI:57642"/>
        <dbReference type="ChEBI" id="CHEBI:77875"/>
        <dbReference type="EC" id="2.5.1.72"/>
    </reaction>
    <physiologicalReaction direction="left-to-right" evidence="1">
        <dbReference type="Rhea" id="RHEA:25889"/>
    </physiologicalReaction>
</comment>
<comment type="cofactor">
    <cofactor evidence="1">
        <name>[4Fe-4S] cluster</name>
        <dbReference type="ChEBI" id="CHEBI:49883"/>
    </cofactor>
    <text evidence="1">Binds 1 [4Fe-4S] cluster per subunit.</text>
</comment>
<comment type="pathway">
    <text evidence="1">Cofactor biosynthesis; NAD(+) biosynthesis; quinolinate from iminoaspartate: step 1/1.</text>
</comment>
<comment type="subcellular location">
    <subcellularLocation>
        <location evidence="1">Cytoplasm</location>
    </subcellularLocation>
</comment>
<comment type="similarity">
    <text evidence="1">Belongs to the quinolinate synthase family. Type 3 subfamily.</text>
</comment>
<proteinExistence type="inferred from homology"/>
<accession>Q9HNZ1</accession>
<reference key="1">
    <citation type="journal article" date="2000" name="Proc. Natl. Acad. Sci. U.S.A.">
        <title>Genome sequence of Halobacterium species NRC-1.</title>
        <authorList>
            <person name="Ng W.V."/>
            <person name="Kennedy S.P."/>
            <person name="Mahairas G.G."/>
            <person name="Berquist B."/>
            <person name="Pan M."/>
            <person name="Shukla H.D."/>
            <person name="Lasky S.R."/>
            <person name="Baliga N.S."/>
            <person name="Thorsson V."/>
            <person name="Sbrogna J."/>
            <person name="Swartzell S."/>
            <person name="Weir D."/>
            <person name="Hall J."/>
            <person name="Dahl T.A."/>
            <person name="Welti R."/>
            <person name="Goo Y.A."/>
            <person name="Leithauser B."/>
            <person name="Keller K."/>
            <person name="Cruz R."/>
            <person name="Danson M.J."/>
            <person name="Hough D.W."/>
            <person name="Maddocks D.G."/>
            <person name="Jablonski P.E."/>
            <person name="Krebs M.P."/>
            <person name="Angevine C.M."/>
            <person name="Dale H."/>
            <person name="Isenbarger T.A."/>
            <person name="Peck R.F."/>
            <person name="Pohlschroder M."/>
            <person name="Spudich J.L."/>
            <person name="Jung K.-H."/>
            <person name="Alam M."/>
            <person name="Freitas T."/>
            <person name="Hou S."/>
            <person name="Daniels C.J."/>
            <person name="Dennis P.P."/>
            <person name="Omer A.D."/>
            <person name="Ebhardt H."/>
            <person name="Lowe T.M."/>
            <person name="Liang P."/>
            <person name="Riley M."/>
            <person name="Hood L."/>
            <person name="DasSarma S."/>
        </authorList>
    </citation>
    <scope>NUCLEOTIDE SEQUENCE [LARGE SCALE GENOMIC DNA]</scope>
    <source>
        <strain>ATCC 700922 / JCM 11081 / NRC-1</strain>
    </source>
</reference>
<sequence>MDTSSFETDLSLFKYDDLEALPDEYRELTPTARTERIEAARAELGDDVVVLGHNYQRREIVEHADFVGDSYQLSKEAANADADYVIFGGVTFMAESADIITDDSQSVILPSMEASCPMAGMAEALQVDAAWADITAAAPDETIIPITYMNSYADLKAFCAEQGGLVCTSSNAHRAFEWAFERGDKVLFLPDKHLGENTAHRLGMADATVEWDPWAAEGKTAEEVADADIVLWDGYCQVHERFTPEHVAEVRADHEDANVVVHPECRREVVEAADVVGSTATITETVADADPGETWAIGTEIHLANHLQRWHPEVNVVPLCGDACMDCNAMRQIDPNYLAWVLEELVEGRERNVIEVDSEEAELAQVGLDRMLEL</sequence>
<gene>
    <name evidence="1" type="primary">nadA</name>
    <name type="ordered locus">VNG_1882G</name>
</gene>
<keyword id="KW-0004">4Fe-4S</keyword>
<keyword id="KW-0963">Cytoplasm</keyword>
<keyword id="KW-0408">Iron</keyword>
<keyword id="KW-0411">Iron-sulfur</keyword>
<keyword id="KW-0479">Metal-binding</keyword>
<keyword id="KW-0662">Pyridine nucleotide biosynthesis</keyword>
<keyword id="KW-1185">Reference proteome</keyword>
<keyword id="KW-0808">Transferase</keyword>
<evidence type="ECO:0000255" key="1">
    <source>
        <dbReference type="HAMAP-Rule" id="MF_00569"/>
    </source>
</evidence>
<protein>
    <recommendedName>
        <fullName evidence="1">Quinolinate synthase</fullName>
        <ecNumber evidence="1">2.5.1.72</ecNumber>
    </recommendedName>
</protein>
<feature type="chain" id="PRO_0000155824" description="Quinolinate synthase">
    <location>
        <begin position="1"/>
        <end position="374"/>
    </location>
</feature>
<feature type="binding site" evidence="1">
    <location>
        <position position="53"/>
    </location>
    <ligand>
        <name>iminosuccinate</name>
        <dbReference type="ChEBI" id="CHEBI:77875"/>
    </ligand>
</feature>
<feature type="binding site" evidence="1">
    <location>
        <position position="70"/>
    </location>
    <ligand>
        <name>iminosuccinate</name>
        <dbReference type="ChEBI" id="CHEBI:77875"/>
    </ligand>
</feature>
<feature type="binding site" evidence="1">
    <location>
        <position position="116"/>
    </location>
    <ligand>
        <name>[4Fe-4S] cluster</name>
        <dbReference type="ChEBI" id="CHEBI:49883"/>
    </ligand>
</feature>
<feature type="binding site" evidence="1">
    <location>
        <begin position="148"/>
        <end position="150"/>
    </location>
    <ligand>
        <name>iminosuccinate</name>
        <dbReference type="ChEBI" id="CHEBI:77875"/>
    </ligand>
</feature>
<feature type="binding site" evidence="1">
    <location>
        <position position="169"/>
    </location>
    <ligand>
        <name>iminosuccinate</name>
        <dbReference type="ChEBI" id="CHEBI:77875"/>
    </ligand>
</feature>
<feature type="binding site" evidence="1">
    <location>
        <position position="236"/>
    </location>
    <ligand>
        <name>[4Fe-4S] cluster</name>
        <dbReference type="ChEBI" id="CHEBI:49883"/>
    </ligand>
</feature>
<feature type="binding site" evidence="1">
    <location>
        <begin position="262"/>
        <end position="264"/>
    </location>
    <ligand>
        <name>iminosuccinate</name>
        <dbReference type="ChEBI" id="CHEBI:77875"/>
    </ligand>
</feature>
<feature type="binding site" evidence="1">
    <location>
        <position position="279"/>
    </location>
    <ligand>
        <name>iminosuccinate</name>
        <dbReference type="ChEBI" id="CHEBI:77875"/>
    </ligand>
</feature>
<feature type="binding site" evidence="1">
    <location>
        <position position="327"/>
    </location>
    <ligand>
        <name>[4Fe-4S] cluster</name>
        <dbReference type="ChEBI" id="CHEBI:49883"/>
    </ligand>
</feature>
<dbReference type="EC" id="2.5.1.72" evidence="1"/>
<dbReference type="EMBL" id="AE004437">
    <property type="protein sequence ID" value="AAG20079.1"/>
    <property type="molecule type" value="Genomic_DNA"/>
</dbReference>
<dbReference type="PIR" id="C84339">
    <property type="entry name" value="C84339"/>
</dbReference>
<dbReference type="SMR" id="Q9HNZ1"/>
<dbReference type="FunCoup" id="Q9HNZ1">
    <property type="interactions" value="69"/>
</dbReference>
<dbReference type="STRING" id="64091.VNG_1882G"/>
<dbReference type="PaxDb" id="64091-VNG_1882G"/>
<dbReference type="KEGG" id="hal:VNG_1882G"/>
<dbReference type="PATRIC" id="fig|64091.14.peg.1437"/>
<dbReference type="HOGENOM" id="CLU_047382_2_0_2"/>
<dbReference type="InParanoid" id="Q9HNZ1"/>
<dbReference type="OrthoDB" id="5931at2157"/>
<dbReference type="PhylomeDB" id="Q9HNZ1"/>
<dbReference type="UniPathway" id="UPA00253">
    <property type="reaction ID" value="UER00327"/>
</dbReference>
<dbReference type="Proteomes" id="UP000000554">
    <property type="component" value="Chromosome"/>
</dbReference>
<dbReference type="GO" id="GO:0005737">
    <property type="term" value="C:cytoplasm"/>
    <property type="evidence" value="ECO:0007669"/>
    <property type="project" value="UniProtKB-SubCell"/>
</dbReference>
<dbReference type="GO" id="GO:0051539">
    <property type="term" value="F:4 iron, 4 sulfur cluster binding"/>
    <property type="evidence" value="ECO:0000318"/>
    <property type="project" value="GO_Central"/>
</dbReference>
<dbReference type="GO" id="GO:0046872">
    <property type="term" value="F:metal ion binding"/>
    <property type="evidence" value="ECO:0007669"/>
    <property type="project" value="UniProtKB-KW"/>
</dbReference>
<dbReference type="GO" id="GO:0008987">
    <property type="term" value="F:quinolinate synthetase A activity"/>
    <property type="evidence" value="ECO:0000318"/>
    <property type="project" value="GO_Central"/>
</dbReference>
<dbReference type="GO" id="GO:0034628">
    <property type="term" value="P:'de novo' NAD biosynthetic process from L-aspartate"/>
    <property type="evidence" value="ECO:0000318"/>
    <property type="project" value="GO_Central"/>
</dbReference>
<dbReference type="Gene3D" id="3.40.50.10800">
    <property type="entry name" value="NadA-like"/>
    <property type="match status" value="3"/>
</dbReference>
<dbReference type="HAMAP" id="MF_00569">
    <property type="entry name" value="NadA_type3"/>
    <property type="match status" value="1"/>
</dbReference>
<dbReference type="InterPro" id="IPR003473">
    <property type="entry name" value="NadA"/>
</dbReference>
<dbReference type="InterPro" id="IPR036094">
    <property type="entry name" value="NadA_sf"/>
</dbReference>
<dbReference type="InterPro" id="IPR023515">
    <property type="entry name" value="Quinolinate_synth_A_type3"/>
</dbReference>
<dbReference type="NCBIfam" id="TIGR00550">
    <property type="entry name" value="nadA"/>
    <property type="match status" value="1"/>
</dbReference>
<dbReference type="NCBIfam" id="NF006883">
    <property type="entry name" value="PRK09375.2-4"/>
    <property type="match status" value="1"/>
</dbReference>
<dbReference type="PANTHER" id="PTHR30573:SF0">
    <property type="entry name" value="QUINOLINATE SYNTHASE, CHLOROPLASTIC"/>
    <property type="match status" value="1"/>
</dbReference>
<dbReference type="PANTHER" id="PTHR30573">
    <property type="entry name" value="QUINOLINATE SYNTHETASE A"/>
    <property type="match status" value="1"/>
</dbReference>
<dbReference type="Pfam" id="PF02445">
    <property type="entry name" value="NadA"/>
    <property type="match status" value="1"/>
</dbReference>
<dbReference type="SUPFAM" id="SSF142754">
    <property type="entry name" value="NadA-like"/>
    <property type="match status" value="1"/>
</dbReference>
<organism>
    <name type="scientific">Halobacterium salinarum (strain ATCC 700922 / JCM 11081 / NRC-1)</name>
    <name type="common">Halobacterium halobium</name>
    <dbReference type="NCBI Taxonomy" id="64091"/>
    <lineage>
        <taxon>Archaea</taxon>
        <taxon>Methanobacteriati</taxon>
        <taxon>Methanobacteriota</taxon>
        <taxon>Stenosarchaea group</taxon>
        <taxon>Halobacteria</taxon>
        <taxon>Halobacteriales</taxon>
        <taxon>Halobacteriaceae</taxon>
        <taxon>Halobacterium</taxon>
        <taxon>Halobacterium salinarum NRC-34001</taxon>
    </lineage>
</organism>
<name>NADA_HALSA</name>